<protein>
    <recommendedName>
        <fullName evidence="5">Prolyl tripeptidyl peptidase</fullName>
        <shortName evidence="6">PTP</shortName>
        <ecNumber>3.4.14.12</ecNumber>
    </recommendedName>
    <alternativeName>
        <fullName evidence="5">Prolyl tripeptidyl peptidase 81.8 kDa form</fullName>
    </alternativeName>
    <alternativeName>
        <fullName evidence="5">Prolyl tripeptidyl peptidase A</fullName>
    </alternativeName>
    <component>
        <recommendedName>
            <fullName evidence="5">Prolyl tripeptidyl peptidase 75.8 kDa form</fullName>
        </recommendedName>
    </component>
</protein>
<organism>
    <name type="scientific">Porphyromonas gingivalis (strain ATCC BAA-308 / W83)</name>
    <dbReference type="NCBI Taxonomy" id="242619"/>
    <lineage>
        <taxon>Bacteria</taxon>
        <taxon>Pseudomonadati</taxon>
        <taxon>Bacteroidota</taxon>
        <taxon>Bacteroidia</taxon>
        <taxon>Bacteroidales</taxon>
        <taxon>Porphyromonadaceae</taxon>
        <taxon>Porphyromonas</taxon>
    </lineage>
</organism>
<sequence>MKKTIFQQLFLSVCALTVALPCSAQSPETSGKEFTLEQLMPGGKEFYNFYPEYVVGLQWMGDNYVFIEGDDLVFNKANGKSAQTTRFSAADLNALMPEGCKFQTTDAFPSFRTLDAGRGLVVLFTQGGLVGFDMLARKVTYLFDTNEETASLDFSPVGDRVAYVRNHNLYIARGGKLGEGMSRAIAVTIDGTETLVYGQAVHQREFGIEKGTFWSPKGSCLAFYRMDQSMVKPTPIVDYHPLEAESKPLYYPMAGTPSHHVTVGIYHLATGKTVYLQTGEPKEKFLTNLSWSPDENILYVAEVNRAQNECKVNAYDAETGRFVRTLFVETDKHYVEPLHPLTFLPGSNNQFIWQSRRDGWNHLYLYDTTGRLIRQVTKGEWEVTNFAGFDPKGTRLYFESTEASPLERHFYCIDIKGGKTKDLTPESGMHRTQLSPDGSAIIDIFQSPTVPRKVTVTNIGKGSHTLLEAKNPDTGYAMPEIRTGTIMAADGQTPLYYKLTMPLHFDPAKKYPVIVYVYGGPHAQLVTKTWRSSVGGWDIYMAQKGYAVFTVDSRGSANRGAAFEQVIHRRLGQTEMADQMCGVDFLKSQSWVDADRIGVHGWSYGGFMTTNLMLTHGDVFKVGVAGGPVIDWNRYEIMYGERYFDAPQENPEGYDAANLLKRAGDLKGRLMLIHGAIDPVVVWQHSLLFLDACVKARTYPDYYVYPSHEHNVMGPDRVHLYETITRYFTDHL</sequence>
<gene>
    <name evidence="5" type="primary">ptpA</name>
    <name type="ordered locus">PG_1361</name>
</gene>
<evidence type="ECO:0000250" key="1">
    <source>
        <dbReference type="UniProtKB" id="Q12884"/>
    </source>
</evidence>
<evidence type="ECO:0000255" key="2"/>
<evidence type="ECO:0000269" key="3">
    <source>
    </source>
</evidence>
<evidence type="ECO:0000269" key="4">
    <source>
    </source>
</evidence>
<evidence type="ECO:0000303" key="5">
    <source>
    </source>
</evidence>
<evidence type="ECO:0000303" key="6">
    <source>
    </source>
</evidence>
<evidence type="ECO:0000305" key="7"/>
<evidence type="ECO:0007829" key="8">
    <source>
        <dbReference type="PDB" id="2DCM"/>
    </source>
</evidence>
<evidence type="ECO:0007829" key="9">
    <source>
        <dbReference type="PDB" id="2Z3W"/>
    </source>
</evidence>
<evidence type="ECO:0007829" key="10">
    <source>
        <dbReference type="PDB" id="2Z3Z"/>
    </source>
</evidence>
<comment type="function">
    <text evidence="3">Serine proteinase. Releases tripeptides from the free amino terminus of proteins. Has a requirement for Pro in the P1 position, but is inactivated by Pro in the P1' position.</text>
</comment>
<comment type="catalytic activity">
    <reaction evidence="3">
        <text>Hydrolysis of Xaa-Xaa-Pro-|-Yaa- releasing the N-terminal tripeptide of a peptide with Pro as the third residue (position P1) and where Yaa is not proline.</text>
        <dbReference type="EC" id="3.4.14.12"/>
    </reaction>
</comment>
<comment type="activity regulation">
    <text evidence="3">Strongly inhibited by diisopropyl fluorophosphate and Pefabloc. Weakly inhibited by 3,4-dichloroisocumarin. Not inhibited by phenylmethylsulfonyl fluoride, leupeptin, antipain or prolinal. Activated by iodoacetamide.</text>
</comment>
<comment type="biophysicochemical properties">
    <phDependence>
        <text evidence="3">Optimum pH is 6-8.</text>
    </phDependence>
    <temperatureDependence>
        <text evidence="3">Stable for at least 12 hours at 25 or 37 degrees Celsius (at pH 7.6).</text>
    </temperatureDependence>
</comment>
<comment type="PTM">
    <text evidence="3">The N-terminus is blocked.</text>
</comment>
<comment type="similarity">
    <text evidence="2">Belongs to the peptidase S9B family.</text>
</comment>
<reference key="1">
    <citation type="journal article" date="2003" name="J. Bacteriol.">
        <title>Complete genome sequence of the oral pathogenic bacterium Porphyromonas gingivalis strain W83.</title>
        <authorList>
            <person name="Nelson K.E."/>
            <person name="Fleischmann R.D."/>
            <person name="DeBoy R.T."/>
            <person name="Paulsen I.T."/>
            <person name="Fouts D.E."/>
            <person name="Eisen J.A."/>
            <person name="Daugherty S.C."/>
            <person name="Dodson R.J."/>
            <person name="Durkin A.S."/>
            <person name="Gwinn M.L."/>
            <person name="Haft D.H."/>
            <person name="Kolonay J.F."/>
            <person name="Nelson W.C."/>
            <person name="Mason T.M."/>
            <person name="Tallon L."/>
            <person name="Gray J."/>
            <person name="Granger D."/>
            <person name="Tettelin H."/>
            <person name="Dong H."/>
            <person name="Galvin J.L."/>
            <person name="Duncan M.J."/>
            <person name="Dewhirst F.E."/>
            <person name="Fraser C.M."/>
        </authorList>
    </citation>
    <scope>NUCLEOTIDE SEQUENCE [LARGE SCALE GENOMIC DNA]</scope>
    <source>
        <strain>ATCC BAA-308 / W83</strain>
    </source>
</reference>
<reference evidence="7" key="2">
    <citation type="journal article" date="1999" name="J. Biol. Chem.">
        <title>Prolyl tripeptidyl peptidase from Porphyromonas gingivalis. A novel enzyme with possible pathological implications for the development of periodontitis.</title>
        <authorList>
            <person name="Banbula A."/>
            <person name="Mak P."/>
            <person name="Bugno M."/>
            <person name="Silberring J."/>
            <person name="Dubin A."/>
            <person name="Nelson D."/>
            <person name="Travis J."/>
            <person name="Potempa J."/>
        </authorList>
    </citation>
    <scope>PROTEIN SEQUENCE OF 81-97; 113-126 AND 597-612</scope>
    <scope>FUNCTION</scope>
    <scope>CATALYTIC ACTIVITY</scope>
    <scope>ACTIVITY REGULATION</scope>
    <scope>BIOPHYSICOCHEMICAL PROPERTIES</scope>
    <scope>BLOCKAGE OF N-TERMINUS</scope>
</reference>
<reference evidence="7" key="3">
    <citation type="journal article" date="2006" name="J. Mol. Biol.">
        <title>Crystal structure and mechanism of tripeptidyl activity of prolyl tripeptidyl aminopeptidase from Porphyromonas gingivalis.</title>
        <authorList>
            <person name="Ito K."/>
            <person name="Nakajima Y."/>
            <person name="Xu Y."/>
            <person name="Yamada N."/>
            <person name="Onohara Y."/>
            <person name="Ito T."/>
            <person name="Matsubara F."/>
            <person name="Kabashima T."/>
            <person name="Nakayama K."/>
            <person name="Yoshimoto T."/>
        </authorList>
    </citation>
    <scope>X-RAY CRYSTALLOGRAPHY (2.10 ANGSTROMS) OF 39-732</scope>
</reference>
<reference evidence="7" key="4">
    <citation type="journal article" date="2008" name="J. Mol. Biol.">
        <title>Novel inhibitor for prolyl tripeptidyl aminopeptidase from Porphyromonas gingivalis and details of substrate-recognition mechanism.</title>
        <authorList>
            <person name="Xu Y."/>
            <person name="Nakajima Y."/>
            <person name="Ito K."/>
            <person name="Zheng H."/>
            <person name="Oyama H."/>
            <person name="Heiser U."/>
            <person name="Hoffmann T."/>
            <person name="Gartner U.T."/>
            <person name="Demuth H.U."/>
            <person name="Yoshimoto T."/>
        </authorList>
    </citation>
    <scope>X-RAY CRYSTALLOGRAPHY (1.95 ANGSTROMS) OF 39-732 IN COMPLEX WITH INHIBITOR</scope>
    <scope>MUTAGENESIS OF GLU-205 AND GLU-636</scope>
</reference>
<dbReference type="EC" id="3.4.14.12"/>
<dbReference type="EMBL" id="AE015924">
    <property type="protein sequence ID" value="AAQ66425.1"/>
    <property type="molecule type" value="Genomic_DNA"/>
</dbReference>
<dbReference type="RefSeq" id="WP_005873421.1">
    <property type="nucleotide sequence ID" value="NC_002950.2"/>
</dbReference>
<dbReference type="PDB" id="2D5L">
    <property type="method" value="X-ray"/>
    <property type="resolution" value="2.10 A"/>
    <property type="chains" value="A=39-732"/>
</dbReference>
<dbReference type="PDB" id="2DCM">
    <property type="method" value="X-ray"/>
    <property type="resolution" value="2.90 A"/>
    <property type="chains" value="A=39-732"/>
</dbReference>
<dbReference type="PDB" id="2EEP">
    <property type="method" value="X-ray"/>
    <property type="resolution" value="2.20 A"/>
    <property type="chains" value="A=39-732"/>
</dbReference>
<dbReference type="PDB" id="2Z3W">
    <property type="method" value="X-ray"/>
    <property type="resolution" value="2.00 A"/>
    <property type="chains" value="A=39-732"/>
</dbReference>
<dbReference type="PDB" id="2Z3Z">
    <property type="method" value="X-ray"/>
    <property type="resolution" value="1.95 A"/>
    <property type="chains" value="A=39-732"/>
</dbReference>
<dbReference type="PDBsum" id="2D5L"/>
<dbReference type="PDBsum" id="2DCM"/>
<dbReference type="PDBsum" id="2EEP"/>
<dbReference type="PDBsum" id="2Z3W"/>
<dbReference type="PDBsum" id="2Z3Z"/>
<dbReference type="SMR" id="Q7MUW6"/>
<dbReference type="STRING" id="242619.PG_1361"/>
<dbReference type="DrugBank" id="DB07813">
    <property type="generic name" value="GLYCYLALANYL-N-2-NAPHTHYL-L-PROLINEAMIDE"/>
</dbReference>
<dbReference type="ESTHER" id="porgi-q7muw6">
    <property type="family name" value="DPP4N_Peptidase_S9"/>
</dbReference>
<dbReference type="MEROPS" id="S09.017"/>
<dbReference type="EnsemblBacteria" id="AAQ66425">
    <property type="protein sequence ID" value="AAQ66425"/>
    <property type="gene ID" value="PG_1361"/>
</dbReference>
<dbReference type="KEGG" id="pgi:PG_1361"/>
<dbReference type="eggNOG" id="COG0823">
    <property type="taxonomic scope" value="Bacteria"/>
</dbReference>
<dbReference type="eggNOG" id="COG1506">
    <property type="taxonomic scope" value="Bacteria"/>
</dbReference>
<dbReference type="HOGENOM" id="CLU_006105_2_0_10"/>
<dbReference type="BRENDA" id="3.4.14.12">
    <property type="organism ID" value="756"/>
</dbReference>
<dbReference type="EvolutionaryTrace" id="Q7MUW6"/>
<dbReference type="Proteomes" id="UP000000588">
    <property type="component" value="Chromosome"/>
</dbReference>
<dbReference type="GO" id="GO:0004177">
    <property type="term" value="F:aminopeptidase activity"/>
    <property type="evidence" value="ECO:0007669"/>
    <property type="project" value="UniProtKB-KW"/>
</dbReference>
<dbReference type="GO" id="GO:0008239">
    <property type="term" value="F:dipeptidyl-peptidase activity"/>
    <property type="evidence" value="ECO:0007669"/>
    <property type="project" value="TreeGrafter"/>
</dbReference>
<dbReference type="GO" id="GO:0008236">
    <property type="term" value="F:serine-type peptidase activity"/>
    <property type="evidence" value="ECO:0007669"/>
    <property type="project" value="UniProtKB-KW"/>
</dbReference>
<dbReference type="GO" id="GO:0006508">
    <property type="term" value="P:proteolysis"/>
    <property type="evidence" value="ECO:0007669"/>
    <property type="project" value="UniProtKB-KW"/>
</dbReference>
<dbReference type="Gene3D" id="3.40.50.1820">
    <property type="entry name" value="alpha/beta hydrolase"/>
    <property type="match status" value="1"/>
</dbReference>
<dbReference type="Gene3D" id="2.140.10.30">
    <property type="entry name" value="Dipeptidylpeptidase IV, N-terminal domain"/>
    <property type="match status" value="1"/>
</dbReference>
<dbReference type="InterPro" id="IPR029058">
    <property type="entry name" value="AB_hydrolase_fold"/>
</dbReference>
<dbReference type="InterPro" id="IPR001375">
    <property type="entry name" value="Peptidase_S9_cat"/>
</dbReference>
<dbReference type="InterPro" id="IPR002469">
    <property type="entry name" value="Peptidase_S9B_N"/>
</dbReference>
<dbReference type="InterPro" id="IPR050278">
    <property type="entry name" value="Serine_Prot_S9B/DPPIV"/>
</dbReference>
<dbReference type="PANTHER" id="PTHR11731:SF193">
    <property type="entry name" value="DIPEPTIDYL PEPTIDASE 9"/>
    <property type="match status" value="1"/>
</dbReference>
<dbReference type="PANTHER" id="PTHR11731">
    <property type="entry name" value="PROTEASE FAMILY S9B,C DIPEPTIDYL-PEPTIDASE IV-RELATED"/>
    <property type="match status" value="1"/>
</dbReference>
<dbReference type="Pfam" id="PF00930">
    <property type="entry name" value="DPPIV_N"/>
    <property type="match status" value="1"/>
</dbReference>
<dbReference type="Pfam" id="PF00326">
    <property type="entry name" value="Peptidase_S9"/>
    <property type="match status" value="1"/>
</dbReference>
<dbReference type="SUPFAM" id="SSF53474">
    <property type="entry name" value="alpha/beta-Hydrolases"/>
    <property type="match status" value="1"/>
</dbReference>
<dbReference type="SUPFAM" id="SSF82171">
    <property type="entry name" value="DPP6 N-terminal domain-like"/>
    <property type="match status" value="1"/>
</dbReference>
<proteinExistence type="evidence at protein level"/>
<accession>Q7MUW6</accession>
<keyword id="KW-0002">3D-structure</keyword>
<keyword id="KW-0031">Aminopeptidase</keyword>
<keyword id="KW-0903">Direct protein sequencing</keyword>
<keyword id="KW-0378">Hydrolase</keyword>
<keyword id="KW-0645">Protease</keyword>
<keyword id="KW-1185">Reference proteome</keyword>
<keyword id="KW-0720">Serine protease</keyword>
<keyword id="KW-0732">Signal</keyword>
<name>PTP_PORGI</name>
<feature type="signal peptide" evidence="2">
    <location>
        <begin position="1"/>
        <end position="24"/>
    </location>
</feature>
<feature type="chain" id="PRO_0000394757" description="Prolyl tripeptidyl peptidase" evidence="2">
    <location>
        <begin position="25"/>
        <end position="732"/>
    </location>
</feature>
<feature type="chain" id="PRO_0000394758" description="Prolyl tripeptidyl peptidase 75.8 kDa form" evidence="3">
    <location>
        <begin position="81"/>
        <end position="732"/>
    </location>
</feature>
<feature type="active site" description="Charge relay system" evidence="1">
    <location>
        <position position="603"/>
    </location>
</feature>
<feature type="active site" description="Charge relay system" evidence="1">
    <location>
        <position position="678"/>
    </location>
</feature>
<feature type="active site" description="Charge relay system" evidence="1">
    <location>
        <position position="710"/>
    </location>
</feature>
<feature type="mutagenesis site" description="Inactive." evidence="4">
    <original>E</original>
    <variation>Q</variation>
    <location>
        <position position="205"/>
    </location>
</feature>
<feature type="mutagenesis site" description="Reduced activity." evidence="4">
    <original>E</original>
    <variation>A</variation>
    <location>
        <position position="636"/>
    </location>
</feature>
<feature type="strand" evidence="10">
    <location>
        <begin position="58"/>
        <end position="60"/>
    </location>
</feature>
<feature type="strand" evidence="10">
    <location>
        <begin position="63"/>
        <end position="68"/>
    </location>
</feature>
<feature type="strand" evidence="10">
    <location>
        <begin position="71"/>
        <end position="75"/>
    </location>
</feature>
<feature type="strand" evidence="10">
    <location>
        <begin position="85"/>
        <end position="88"/>
    </location>
</feature>
<feature type="helix" evidence="10">
    <location>
        <begin position="89"/>
        <end position="93"/>
    </location>
</feature>
<feature type="strand" evidence="10">
    <location>
        <begin position="111"/>
        <end position="115"/>
    </location>
</feature>
<feature type="turn" evidence="10">
    <location>
        <begin position="116"/>
        <end position="119"/>
    </location>
</feature>
<feature type="strand" evidence="10">
    <location>
        <begin position="120"/>
        <end position="125"/>
    </location>
</feature>
<feature type="strand" evidence="10">
    <location>
        <begin position="128"/>
        <end position="133"/>
    </location>
</feature>
<feature type="turn" evidence="10">
    <location>
        <begin position="134"/>
        <end position="137"/>
    </location>
</feature>
<feature type="strand" evidence="10">
    <location>
        <begin position="138"/>
        <end position="143"/>
    </location>
</feature>
<feature type="strand" evidence="10">
    <location>
        <begin position="158"/>
        <end position="165"/>
    </location>
</feature>
<feature type="strand" evidence="10">
    <location>
        <begin position="168"/>
        <end position="173"/>
    </location>
</feature>
<feature type="turn" evidence="8">
    <location>
        <begin position="177"/>
        <end position="179"/>
    </location>
</feature>
<feature type="strand" evidence="10">
    <location>
        <begin position="185"/>
        <end position="187"/>
    </location>
</feature>
<feature type="strand" evidence="10">
    <location>
        <begin position="195"/>
        <end position="199"/>
    </location>
</feature>
<feature type="helix" evidence="10">
    <location>
        <begin position="202"/>
        <end position="204"/>
    </location>
</feature>
<feature type="strand" evidence="10">
    <location>
        <begin position="211"/>
        <end position="214"/>
    </location>
</feature>
<feature type="strand" evidence="10">
    <location>
        <begin position="218"/>
        <end position="227"/>
    </location>
</feature>
<feature type="strand" evidence="10">
    <location>
        <begin position="234"/>
        <end position="238"/>
    </location>
</feature>
<feature type="strand" evidence="10">
    <location>
        <begin position="241"/>
        <end position="243"/>
    </location>
</feature>
<feature type="strand" evidence="10">
    <location>
        <begin position="245"/>
        <end position="249"/>
    </location>
</feature>
<feature type="strand" evidence="10">
    <location>
        <begin position="260"/>
        <end position="267"/>
    </location>
</feature>
<feature type="turn" evidence="10">
    <location>
        <begin position="268"/>
        <end position="271"/>
    </location>
</feature>
<feature type="strand" evidence="10">
    <location>
        <begin position="272"/>
        <end position="275"/>
    </location>
</feature>
<feature type="strand" evidence="10">
    <location>
        <begin position="285"/>
        <end position="291"/>
    </location>
</feature>
<feature type="strand" evidence="10">
    <location>
        <begin position="295"/>
        <end position="303"/>
    </location>
</feature>
<feature type="strand" evidence="10">
    <location>
        <begin position="309"/>
        <end position="316"/>
    </location>
</feature>
<feature type="turn" evidence="10">
    <location>
        <begin position="317"/>
        <end position="319"/>
    </location>
</feature>
<feature type="strand" evidence="10">
    <location>
        <begin position="322"/>
        <end position="330"/>
    </location>
</feature>
<feature type="strand" evidence="10">
    <location>
        <begin position="348"/>
        <end position="355"/>
    </location>
</feature>
<feature type="strand" evidence="10">
    <location>
        <begin position="362"/>
        <end position="367"/>
    </location>
</feature>
<feature type="strand" evidence="10">
    <location>
        <begin position="372"/>
        <end position="375"/>
    </location>
</feature>
<feature type="strand" evidence="10">
    <location>
        <begin position="379"/>
        <end position="381"/>
    </location>
</feature>
<feature type="strand" evidence="10">
    <location>
        <begin position="383"/>
        <end position="389"/>
    </location>
</feature>
<feature type="strand" evidence="10">
    <location>
        <begin position="393"/>
        <end position="403"/>
    </location>
</feature>
<feature type="strand" evidence="10">
    <location>
        <begin position="408"/>
        <end position="414"/>
    </location>
</feature>
<feature type="strand" evidence="10">
    <location>
        <begin position="421"/>
        <end position="423"/>
    </location>
</feature>
<feature type="strand" evidence="10">
    <location>
        <begin position="426"/>
        <end position="434"/>
    </location>
</feature>
<feature type="strand" evidence="10">
    <location>
        <begin position="438"/>
        <end position="446"/>
    </location>
</feature>
<feature type="strand" evidence="10">
    <location>
        <begin position="453"/>
        <end position="461"/>
    </location>
</feature>
<feature type="strand" evidence="10">
    <location>
        <begin position="463"/>
        <end position="468"/>
    </location>
</feature>
<feature type="strand" evidence="10">
    <location>
        <begin position="481"/>
        <end position="487"/>
    </location>
</feature>
<feature type="strand" evidence="10">
    <location>
        <begin position="491"/>
        <end position="500"/>
    </location>
</feature>
<feature type="strand" evidence="10">
    <location>
        <begin position="511"/>
        <end position="516"/>
    </location>
</feature>
<feature type="helix" evidence="10">
    <location>
        <begin position="537"/>
        <end position="543"/>
    </location>
</feature>
<feature type="strand" evidence="10">
    <location>
        <begin position="547"/>
        <end position="551"/>
    </location>
</feature>
<feature type="strand" evidence="10">
    <location>
        <begin position="557"/>
        <end position="559"/>
    </location>
</feature>
<feature type="helix" evidence="10">
    <location>
        <begin position="561"/>
        <end position="565"/>
    </location>
</feature>
<feature type="turn" evidence="10">
    <location>
        <begin position="566"/>
        <end position="569"/>
    </location>
</feature>
<feature type="helix" evidence="10">
    <location>
        <begin position="573"/>
        <end position="587"/>
    </location>
</feature>
<feature type="strand" evidence="10">
    <location>
        <begin position="592"/>
        <end position="602"/>
    </location>
</feature>
<feature type="helix" evidence="10">
    <location>
        <begin position="604"/>
        <end position="615"/>
    </location>
</feature>
<feature type="turn" evidence="10">
    <location>
        <begin position="617"/>
        <end position="619"/>
    </location>
</feature>
<feature type="strand" evidence="10">
    <location>
        <begin position="620"/>
        <end position="627"/>
    </location>
</feature>
<feature type="helix" evidence="10">
    <location>
        <begin position="632"/>
        <end position="634"/>
    </location>
</feature>
<feature type="helix" evidence="10">
    <location>
        <begin position="637"/>
        <end position="644"/>
    </location>
</feature>
<feature type="turn" evidence="10">
    <location>
        <begin position="647"/>
        <end position="649"/>
    </location>
</feature>
<feature type="helix" evidence="10">
    <location>
        <begin position="651"/>
        <end position="657"/>
    </location>
</feature>
<feature type="helix" evidence="10">
    <location>
        <begin position="659"/>
        <end position="665"/>
    </location>
</feature>
<feature type="strand" evidence="10">
    <location>
        <begin position="668"/>
        <end position="675"/>
    </location>
</feature>
<feature type="strand" evidence="10">
    <location>
        <begin position="679"/>
        <end position="681"/>
    </location>
</feature>
<feature type="helix" evidence="10">
    <location>
        <begin position="684"/>
        <end position="696"/>
    </location>
</feature>
<feature type="strand" evidence="10">
    <location>
        <begin position="701"/>
        <end position="705"/>
    </location>
</feature>
<feature type="strand" evidence="9">
    <location>
        <begin position="709"/>
        <end position="711"/>
    </location>
</feature>
<feature type="helix" evidence="10">
    <location>
        <begin position="716"/>
        <end position="731"/>
    </location>
</feature>